<gene>
    <name type="primary">HTZ1</name>
    <name type="ORF">MGG_06213</name>
</gene>
<reference key="1">
    <citation type="journal article" date="2005" name="Nature">
        <title>The genome sequence of the rice blast fungus Magnaporthe grisea.</title>
        <authorList>
            <person name="Dean R.A."/>
            <person name="Talbot N.J."/>
            <person name="Ebbole D.J."/>
            <person name="Farman M.L."/>
            <person name="Mitchell T.K."/>
            <person name="Orbach M.J."/>
            <person name="Thon M.R."/>
            <person name="Kulkarni R."/>
            <person name="Xu J.-R."/>
            <person name="Pan H."/>
            <person name="Read N.D."/>
            <person name="Lee Y.-H."/>
            <person name="Carbone I."/>
            <person name="Brown D."/>
            <person name="Oh Y.Y."/>
            <person name="Donofrio N."/>
            <person name="Jeong J.S."/>
            <person name="Soanes D.M."/>
            <person name="Djonovic S."/>
            <person name="Kolomiets E."/>
            <person name="Rehmeyer C."/>
            <person name="Li W."/>
            <person name="Harding M."/>
            <person name="Kim S."/>
            <person name="Lebrun M.-H."/>
            <person name="Bohnert H."/>
            <person name="Coughlan S."/>
            <person name="Butler J."/>
            <person name="Calvo S.E."/>
            <person name="Ma L.-J."/>
            <person name="Nicol R."/>
            <person name="Purcell S."/>
            <person name="Nusbaum C."/>
            <person name="Galagan J.E."/>
            <person name="Birren B.W."/>
        </authorList>
    </citation>
    <scope>NUCLEOTIDE SEQUENCE [LARGE SCALE GENOMIC DNA]</scope>
    <source>
        <strain>70-15 / ATCC MYA-4617 / FGSC 8958</strain>
    </source>
</reference>
<accession>A4QVR2</accession>
<protein>
    <recommendedName>
        <fullName>Histone H2A.Z</fullName>
    </recommendedName>
</protein>
<dbReference type="EMBL" id="CM001233">
    <property type="status" value="NOT_ANNOTATED_CDS"/>
    <property type="molecule type" value="Genomic_DNA"/>
</dbReference>
<dbReference type="SMR" id="A4QVR2"/>
<dbReference type="FunCoup" id="A4QVR2">
    <property type="interactions" value="1020"/>
</dbReference>
<dbReference type="STRING" id="242507.A4QVR2"/>
<dbReference type="InParanoid" id="A4QVR2"/>
<dbReference type="Proteomes" id="UP000009058">
    <property type="component" value="Chromosome 3"/>
</dbReference>
<dbReference type="GO" id="GO:0000786">
    <property type="term" value="C:nucleosome"/>
    <property type="evidence" value="ECO:0007669"/>
    <property type="project" value="UniProtKB-KW"/>
</dbReference>
<dbReference type="GO" id="GO:0005634">
    <property type="term" value="C:nucleus"/>
    <property type="evidence" value="ECO:0007669"/>
    <property type="project" value="UniProtKB-SubCell"/>
</dbReference>
<dbReference type="GO" id="GO:0003677">
    <property type="term" value="F:DNA binding"/>
    <property type="evidence" value="ECO:0007669"/>
    <property type="project" value="UniProtKB-KW"/>
</dbReference>
<dbReference type="GO" id="GO:0046982">
    <property type="term" value="F:protein heterodimerization activity"/>
    <property type="evidence" value="ECO:0007669"/>
    <property type="project" value="InterPro"/>
</dbReference>
<dbReference type="GO" id="GO:0030527">
    <property type="term" value="F:structural constituent of chromatin"/>
    <property type="evidence" value="ECO:0007669"/>
    <property type="project" value="InterPro"/>
</dbReference>
<dbReference type="CDD" id="cd00074">
    <property type="entry name" value="HFD_H2A"/>
    <property type="match status" value="1"/>
</dbReference>
<dbReference type="FunFam" id="1.10.20.10:FF:000021">
    <property type="entry name" value="Histone H2A"/>
    <property type="match status" value="1"/>
</dbReference>
<dbReference type="Gene3D" id="1.10.20.10">
    <property type="entry name" value="Histone, subunit A"/>
    <property type="match status" value="1"/>
</dbReference>
<dbReference type="InterPro" id="IPR009072">
    <property type="entry name" value="Histone-fold"/>
</dbReference>
<dbReference type="InterPro" id="IPR002119">
    <property type="entry name" value="Histone_H2A"/>
</dbReference>
<dbReference type="InterPro" id="IPR007125">
    <property type="entry name" value="Histone_H2A/H2B/H3"/>
</dbReference>
<dbReference type="InterPro" id="IPR032454">
    <property type="entry name" value="Histone_H2A_C"/>
</dbReference>
<dbReference type="PANTHER" id="PTHR23430">
    <property type="entry name" value="HISTONE H2A"/>
    <property type="match status" value="1"/>
</dbReference>
<dbReference type="Pfam" id="PF00125">
    <property type="entry name" value="Histone"/>
    <property type="match status" value="1"/>
</dbReference>
<dbReference type="Pfam" id="PF16211">
    <property type="entry name" value="Histone_H2A_C"/>
    <property type="match status" value="1"/>
</dbReference>
<dbReference type="PRINTS" id="PR00620">
    <property type="entry name" value="HISTONEH2A"/>
</dbReference>
<dbReference type="SMART" id="SM00414">
    <property type="entry name" value="H2A"/>
    <property type="match status" value="1"/>
</dbReference>
<dbReference type="SUPFAM" id="SSF47113">
    <property type="entry name" value="Histone-fold"/>
    <property type="match status" value="1"/>
</dbReference>
<comment type="function">
    <text evidence="1">Variant histone H2A which can replace H2A in some nucleosomes. Nucleosomes wrap and compact DNA into chromatin, limiting DNA accessibility to the cellular machineries which require DNA as a template. Histones thereby play a central role in transcription regulation, DNA repair, DNA replication and chromosomal stability. DNA accessibility is regulated via a complex set of post-translational modifications of histones, also called histone code, and nucleosome remodeling. This variant is enriched at promoters, it may keep them in a repressed state until the appropriate activation signal is received. Near telomeres, it may counteract gene silencing caused by the spread of heterochromatin proteins. Required for the RNA polymerase II and SPT15/TBP recruitment to the target genes. Involved in chromosome stability (By similarity).</text>
</comment>
<comment type="subunit">
    <text evidence="1">The nucleosome is a histone octamer containing two molecules each of H2A, H2B, H3 and H4 assembled in one H3-H4 heterotetramer and two H2A-H2B heterodimers. The octamer wraps approximately 147 bp of DNA. H2A or its variant H2A.Z forms a heterodimer with H2B. H2A.Z associates with the VPS72/SWC2 subunit of the SWR1 chromatin remodeling complex. Also interacts with RBP1/DNA-directed RNA polymerase II largest subunit (By similarity).</text>
</comment>
<comment type="subcellular location">
    <subcellularLocation>
        <location evidence="1">Nucleus</location>
    </subcellularLocation>
    <subcellularLocation>
        <location evidence="1">Chromosome</location>
    </subcellularLocation>
</comment>
<comment type="PTM">
    <text evidence="1">Acetylated once deposited into chromatin.</text>
</comment>
<comment type="similarity">
    <text evidence="3">Belongs to the histone H2A family.</text>
</comment>
<sequence length="142" mass="15274">MAGGKGKSSGGKSSGGKTSGEGPKKQQSHSARAGLQFPCGRVKRFLKQNTQNKMRVGAKAAVYVTAVLEYLTAEVLELAGNAAKDLKVKRITPRHLQLAIRGDEELDTLIRATIAFGGVLPHINRALLLKVEQKKKNKQIEA</sequence>
<organism>
    <name type="scientific">Pyricularia oryzae (strain 70-15 / ATCC MYA-4617 / FGSC 8958)</name>
    <name type="common">Rice blast fungus</name>
    <name type="synonym">Magnaporthe oryzae</name>
    <dbReference type="NCBI Taxonomy" id="242507"/>
    <lineage>
        <taxon>Eukaryota</taxon>
        <taxon>Fungi</taxon>
        <taxon>Dikarya</taxon>
        <taxon>Ascomycota</taxon>
        <taxon>Pezizomycotina</taxon>
        <taxon>Sordariomycetes</taxon>
        <taxon>Sordariomycetidae</taxon>
        <taxon>Magnaporthales</taxon>
        <taxon>Pyriculariaceae</taxon>
        <taxon>Pyricularia</taxon>
    </lineage>
</organism>
<keyword id="KW-0007">Acetylation</keyword>
<keyword id="KW-0158">Chromosome</keyword>
<keyword id="KW-0238">DNA-binding</keyword>
<keyword id="KW-0544">Nucleosome core</keyword>
<keyword id="KW-0539">Nucleus</keyword>
<keyword id="KW-1185">Reference proteome</keyword>
<name>H2AZ_PYRO7</name>
<feature type="chain" id="PRO_0000297724" description="Histone H2A.Z">
    <location>
        <begin position="1"/>
        <end position="142"/>
    </location>
</feature>
<feature type="region of interest" description="Disordered" evidence="2">
    <location>
        <begin position="1"/>
        <end position="35"/>
    </location>
</feature>
<feature type="compositionally biased region" description="Gly residues" evidence="2">
    <location>
        <begin position="1"/>
        <end position="19"/>
    </location>
</feature>
<feature type="modified residue" description="N6-acetyllysine" evidence="1">
    <location>
        <position position="5"/>
    </location>
</feature>
<feature type="modified residue" description="N6-acetyllysine" evidence="1">
    <location>
        <position position="12"/>
    </location>
</feature>
<proteinExistence type="inferred from homology"/>
<evidence type="ECO:0000250" key="1"/>
<evidence type="ECO:0000256" key="2">
    <source>
        <dbReference type="SAM" id="MobiDB-lite"/>
    </source>
</evidence>
<evidence type="ECO:0000305" key="3"/>